<evidence type="ECO:0000255" key="1">
    <source>
        <dbReference type="HAMAP-Rule" id="MF_01321"/>
    </source>
</evidence>
<keyword id="KW-0240">DNA-directed RNA polymerase</keyword>
<keyword id="KW-0548">Nucleotidyltransferase</keyword>
<keyword id="KW-0804">Transcription</keyword>
<keyword id="KW-0808">Transferase</keyword>
<name>RPOB_STAA2</name>
<organism>
    <name type="scientific">Staphylococcus aureus (strain JH1)</name>
    <dbReference type="NCBI Taxonomy" id="359787"/>
    <lineage>
        <taxon>Bacteria</taxon>
        <taxon>Bacillati</taxon>
        <taxon>Bacillota</taxon>
        <taxon>Bacilli</taxon>
        <taxon>Bacillales</taxon>
        <taxon>Staphylococcaceae</taxon>
        <taxon>Staphylococcus</taxon>
    </lineage>
</organism>
<proteinExistence type="inferred from homology"/>
<accession>A6TZ19</accession>
<feature type="chain" id="PRO_1000086384" description="DNA-directed RNA polymerase subunit beta">
    <location>
        <begin position="1"/>
        <end position="1183"/>
    </location>
</feature>
<protein>
    <recommendedName>
        <fullName evidence="1">DNA-directed RNA polymerase subunit beta</fullName>
        <shortName evidence="1">RNAP subunit beta</shortName>
        <ecNumber evidence="1">2.7.7.6</ecNumber>
    </recommendedName>
    <alternativeName>
        <fullName evidence="1">RNA polymerase subunit beta</fullName>
    </alternativeName>
    <alternativeName>
        <fullName evidence="1">Transcriptase subunit beta</fullName>
    </alternativeName>
</protein>
<comment type="function">
    <text evidence="1">DNA-dependent RNA polymerase catalyzes the transcription of DNA into RNA using the four ribonucleoside triphosphates as substrates.</text>
</comment>
<comment type="catalytic activity">
    <reaction evidence="1">
        <text>RNA(n) + a ribonucleoside 5'-triphosphate = RNA(n+1) + diphosphate</text>
        <dbReference type="Rhea" id="RHEA:21248"/>
        <dbReference type="Rhea" id="RHEA-COMP:14527"/>
        <dbReference type="Rhea" id="RHEA-COMP:17342"/>
        <dbReference type="ChEBI" id="CHEBI:33019"/>
        <dbReference type="ChEBI" id="CHEBI:61557"/>
        <dbReference type="ChEBI" id="CHEBI:140395"/>
        <dbReference type="EC" id="2.7.7.6"/>
    </reaction>
</comment>
<comment type="subunit">
    <text evidence="1">The RNAP catalytic core consists of 2 alpha, 1 beta, 1 beta' and 1 omega subunit. When a sigma factor is associated with the core the holoenzyme is formed, which can initiate transcription.</text>
</comment>
<comment type="similarity">
    <text evidence="1">Belongs to the RNA polymerase beta chain family.</text>
</comment>
<gene>
    <name evidence="1" type="primary">rpoB</name>
    <name type="ordered locus">SaurJH1_0579</name>
</gene>
<dbReference type="EC" id="2.7.7.6" evidence="1"/>
<dbReference type="EMBL" id="CP000736">
    <property type="protein sequence ID" value="ABR51437.1"/>
    <property type="molecule type" value="Genomic_DNA"/>
</dbReference>
<dbReference type="SMR" id="A6TZ19"/>
<dbReference type="KEGG" id="sah:SaurJH1_0579"/>
<dbReference type="HOGENOM" id="CLU_000524_4_1_9"/>
<dbReference type="GO" id="GO:0000428">
    <property type="term" value="C:DNA-directed RNA polymerase complex"/>
    <property type="evidence" value="ECO:0007669"/>
    <property type="project" value="UniProtKB-KW"/>
</dbReference>
<dbReference type="GO" id="GO:0003677">
    <property type="term" value="F:DNA binding"/>
    <property type="evidence" value="ECO:0007669"/>
    <property type="project" value="UniProtKB-UniRule"/>
</dbReference>
<dbReference type="GO" id="GO:0003899">
    <property type="term" value="F:DNA-directed RNA polymerase activity"/>
    <property type="evidence" value="ECO:0007669"/>
    <property type="project" value="UniProtKB-UniRule"/>
</dbReference>
<dbReference type="GO" id="GO:0032549">
    <property type="term" value="F:ribonucleoside binding"/>
    <property type="evidence" value="ECO:0007669"/>
    <property type="project" value="InterPro"/>
</dbReference>
<dbReference type="GO" id="GO:0006351">
    <property type="term" value="P:DNA-templated transcription"/>
    <property type="evidence" value="ECO:0007669"/>
    <property type="project" value="UniProtKB-UniRule"/>
</dbReference>
<dbReference type="CDD" id="cd00653">
    <property type="entry name" value="RNA_pol_B_RPB2"/>
    <property type="match status" value="1"/>
</dbReference>
<dbReference type="FunFam" id="3.90.1800.10:FF:000001">
    <property type="entry name" value="DNA-directed RNA polymerase subunit beta"/>
    <property type="match status" value="1"/>
</dbReference>
<dbReference type="Gene3D" id="2.40.50.100">
    <property type="match status" value="1"/>
</dbReference>
<dbReference type="Gene3D" id="2.40.50.150">
    <property type="match status" value="1"/>
</dbReference>
<dbReference type="Gene3D" id="3.90.1100.10">
    <property type="match status" value="3"/>
</dbReference>
<dbReference type="Gene3D" id="2.40.270.10">
    <property type="entry name" value="DNA-directed RNA polymerase, subunit 2, domain 6"/>
    <property type="match status" value="1"/>
</dbReference>
<dbReference type="Gene3D" id="3.90.1800.10">
    <property type="entry name" value="RNA polymerase alpha subunit dimerisation domain"/>
    <property type="match status" value="1"/>
</dbReference>
<dbReference type="Gene3D" id="3.90.1110.10">
    <property type="entry name" value="RNA polymerase Rpb2, domain 2"/>
    <property type="match status" value="1"/>
</dbReference>
<dbReference type="HAMAP" id="MF_01321">
    <property type="entry name" value="RNApol_bact_RpoB"/>
    <property type="match status" value="1"/>
</dbReference>
<dbReference type="InterPro" id="IPR019462">
    <property type="entry name" value="DNA-dir_RNA_pol_bsu_external_1"/>
</dbReference>
<dbReference type="InterPro" id="IPR015712">
    <property type="entry name" value="DNA-dir_RNA_pol_su2"/>
</dbReference>
<dbReference type="InterPro" id="IPR007120">
    <property type="entry name" value="DNA-dir_RNAP_su2_dom"/>
</dbReference>
<dbReference type="InterPro" id="IPR037033">
    <property type="entry name" value="DNA-dir_RNAP_su2_hyb_sf"/>
</dbReference>
<dbReference type="InterPro" id="IPR010243">
    <property type="entry name" value="RNA_pol_bsu_bac"/>
</dbReference>
<dbReference type="InterPro" id="IPR007121">
    <property type="entry name" value="RNA_pol_bsu_CS"/>
</dbReference>
<dbReference type="InterPro" id="IPR007644">
    <property type="entry name" value="RNA_pol_bsu_protrusion"/>
</dbReference>
<dbReference type="InterPro" id="IPR007642">
    <property type="entry name" value="RNA_pol_Rpb2_2"/>
</dbReference>
<dbReference type="InterPro" id="IPR037034">
    <property type="entry name" value="RNA_pol_Rpb2_2_sf"/>
</dbReference>
<dbReference type="InterPro" id="IPR007645">
    <property type="entry name" value="RNA_pol_Rpb2_3"/>
</dbReference>
<dbReference type="InterPro" id="IPR007641">
    <property type="entry name" value="RNA_pol_Rpb2_7"/>
</dbReference>
<dbReference type="InterPro" id="IPR014724">
    <property type="entry name" value="RNA_pol_RPB2_OB-fold"/>
</dbReference>
<dbReference type="NCBIfam" id="NF001616">
    <property type="entry name" value="PRK00405.1"/>
    <property type="match status" value="1"/>
</dbReference>
<dbReference type="NCBIfam" id="TIGR02013">
    <property type="entry name" value="rpoB"/>
    <property type="match status" value="1"/>
</dbReference>
<dbReference type="PANTHER" id="PTHR20856">
    <property type="entry name" value="DNA-DIRECTED RNA POLYMERASE I SUBUNIT 2"/>
    <property type="match status" value="1"/>
</dbReference>
<dbReference type="Pfam" id="PF04563">
    <property type="entry name" value="RNA_pol_Rpb2_1"/>
    <property type="match status" value="1"/>
</dbReference>
<dbReference type="Pfam" id="PF04561">
    <property type="entry name" value="RNA_pol_Rpb2_2"/>
    <property type="match status" value="2"/>
</dbReference>
<dbReference type="Pfam" id="PF04565">
    <property type="entry name" value="RNA_pol_Rpb2_3"/>
    <property type="match status" value="1"/>
</dbReference>
<dbReference type="Pfam" id="PF10385">
    <property type="entry name" value="RNA_pol_Rpb2_45"/>
    <property type="match status" value="1"/>
</dbReference>
<dbReference type="Pfam" id="PF00562">
    <property type="entry name" value="RNA_pol_Rpb2_6"/>
    <property type="match status" value="1"/>
</dbReference>
<dbReference type="Pfam" id="PF04560">
    <property type="entry name" value="RNA_pol_Rpb2_7"/>
    <property type="match status" value="1"/>
</dbReference>
<dbReference type="SUPFAM" id="SSF64484">
    <property type="entry name" value="beta and beta-prime subunits of DNA dependent RNA-polymerase"/>
    <property type="match status" value="1"/>
</dbReference>
<dbReference type="PROSITE" id="PS01166">
    <property type="entry name" value="RNA_POL_BETA"/>
    <property type="match status" value="1"/>
</dbReference>
<reference key="1">
    <citation type="submission" date="2007-06" db="EMBL/GenBank/DDBJ databases">
        <title>Complete sequence of chromosome of Staphylococcus aureus subsp. aureus JH1.</title>
        <authorList>
            <consortium name="US DOE Joint Genome Institute"/>
            <person name="Copeland A."/>
            <person name="Lucas S."/>
            <person name="Lapidus A."/>
            <person name="Barry K."/>
            <person name="Detter J.C."/>
            <person name="Glavina del Rio T."/>
            <person name="Hammon N."/>
            <person name="Israni S."/>
            <person name="Dalin E."/>
            <person name="Tice H."/>
            <person name="Pitluck S."/>
            <person name="Chain P."/>
            <person name="Malfatti S."/>
            <person name="Shin M."/>
            <person name="Vergez L."/>
            <person name="Schmutz J."/>
            <person name="Larimer F."/>
            <person name="Land M."/>
            <person name="Hauser L."/>
            <person name="Kyrpides N."/>
            <person name="Ivanova N."/>
            <person name="Tomasz A."/>
            <person name="Richardson P."/>
        </authorList>
    </citation>
    <scope>NUCLEOTIDE SEQUENCE [LARGE SCALE GENOMIC DNA]</scope>
    <source>
        <strain>JH1</strain>
    </source>
</reference>
<sequence>MAGQVVQYGRHRKRRNYARISEVLELPNLIEIQTKSYEWFLREGLIEMFRDISPIEDFTGNLSLEFVDYRLGEPKYDLEESKNRDATYAAPLRVKVRLIIKETGEVKEQEVFMGDFPLMTDTGTFVINGAERVIVSQLVRSPSVYFNEKIDKNGRENYDATIIPNRGAWLEYETDAKDVVYVRIDRTRKLPLTVLLRALGFSSDQEIVDLLGDNEYLRNTLEKDGTENTEQALLEIYERLRPGEPPTVENAKSLLYSRFFDPKRYDLASVGRYKTNKKLHLKHRLFNQKLAEPIVNTETGEIVVEEGTVLDRRKIDEIMDVLESNANSEVFELHGSVIDEPVEIQSIKVYVPNDDEGRTTTVIGNAFPDSEVKCITPADIIASMSYFFNLLSGIGYTDDIDHLGNRRLRSVGELLQNQFRIGLSRMERVVRERMSIQDTESITPQQLINIRPVIASIKEFFGSSQLSQFMDQANPLAELTHKRRLSALGPGGLTRERAQMEVRDVHYSHYGRMCPIETPEGPNIGLINSLSSYARVNEFGFIETPYRKVDLDTHAITDQIDYLTADEEDSYVVAQANSKLDENGRFMDDEVVCRFRGNNTVMAKEKMDYMDVSPKQVVSAATACIPFLENDDSNRALMGANMQRQAVPLMNPEAPFVGTGMEHVAARDSGAAITAKHRGRVEHVESNEILVRRLVEENGVEHEGELDRYPLAKFKRSNSGTCYNQRPIVAVGDVVEYNEILADGPSMELGEMALGRNVVVGFMTWDGYNYEDAVIMSERLVKDDVYTSIHIEEYESEARDTKLGPEEITRDIPNVSESALKNLDDRGIVYIGAEVKDGDILVGKVTPKGVTELTAEERLLHAIFGEKAREVRDTSLRVPHGAGGIVLDVKVFNREEGDDTLSPGVNQLVRVYIVQKRKIHVGDKMCGRHGNKGVISKIVPEEDMPYLPDGRPIDIMLNPLGVPSRMNIGQVLELHLGMAAKNLGIHVASPVFDGANDDDVWSTIEEAGMARDGKTVLYDGRTGEPFDNRISVGVMYMLKLAHMVDDKLHARSTGPYSLVTQQPLGGKAQFGGQRFGEMEVWALEAYGAAYTLQEILTYKSDDTVGRVKTYEAIVKGENISRPSVPESFRVLMKELQSLGLDVKVMDEQDNEIEMTDVDDDDVVERKVDLQQNDAPETQKEVTD</sequence>